<comment type="function">
    <text evidence="1">Allows the formation of correctly charged Asn-tRNA(Asn) or Gln-tRNA(Gln) through the transamidation of misacylated Asp-tRNA(Asn) or Glu-tRNA(Gln) in organisms which lack either or both of asparaginyl-tRNA or glutaminyl-tRNA synthetases. The reaction takes place in the presence of glutamine and ATP through an activated phospho-Asp-tRNA(Asn) or phospho-Glu-tRNA(Gln).</text>
</comment>
<comment type="catalytic activity">
    <reaction evidence="1">
        <text>L-glutamyl-tRNA(Gln) + L-glutamine + ATP + H2O = L-glutaminyl-tRNA(Gln) + L-glutamate + ADP + phosphate + H(+)</text>
        <dbReference type="Rhea" id="RHEA:17521"/>
        <dbReference type="Rhea" id="RHEA-COMP:9681"/>
        <dbReference type="Rhea" id="RHEA-COMP:9684"/>
        <dbReference type="ChEBI" id="CHEBI:15377"/>
        <dbReference type="ChEBI" id="CHEBI:15378"/>
        <dbReference type="ChEBI" id="CHEBI:29985"/>
        <dbReference type="ChEBI" id="CHEBI:30616"/>
        <dbReference type="ChEBI" id="CHEBI:43474"/>
        <dbReference type="ChEBI" id="CHEBI:58359"/>
        <dbReference type="ChEBI" id="CHEBI:78520"/>
        <dbReference type="ChEBI" id="CHEBI:78521"/>
        <dbReference type="ChEBI" id="CHEBI:456216"/>
    </reaction>
</comment>
<comment type="catalytic activity">
    <reaction evidence="1">
        <text>L-aspartyl-tRNA(Asn) + L-glutamine + ATP + H2O = L-asparaginyl-tRNA(Asn) + L-glutamate + ADP + phosphate + 2 H(+)</text>
        <dbReference type="Rhea" id="RHEA:14513"/>
        <dbReference type="Rhea" id="RHEA-COMP:9674"/>
        <dbReference type="Rhea" id="RHEA-COMP:9677"/>
        <dbReference type="ChEBI" id="CHEBI:15377"/>
        <dbReference type="ChEBI" id="CHEBI:15378"/>
        <dbReference type="ChEBI" id="CHEBI:29985"/>
        <dbReference type="ChEBI" id="CHEBI:30616"/>
        <dbReference type="ChEBI" id="CHEBI:43474"/>
        <dbReference type="ChEBI" id="CHEBI:58359"/>
        <dbReference type="ChEBI" id="CHEBI:78515"/>
        <dbReference type="ChEBI" id="CHEBI:78516"/>
        <dbReference type="ChEBI" id="CHEBI:456216"/>
    </reaction>
</comment>
<comment type="subunit">
    <text evidence="1">Heterotrimer of A, B and C subunits.</text>
</comment>
<comment type="similarity">
    <text evidence="1">Belongs to the GatB/GatE family. GatB subfamily.</text>
</comment>
<reference key="1">
    <citation type="journal article" date="2010" name="Genome Biol. Evol.">
        <title>Continuing evolution of Burkholderia mallei through genome reduction and large-scale rearrangements.</title>
        <authorList>
            <person name="Losada L."/>
            <person name="Ronning C.M."/>
            <person name="DeShazer D."/>
            <person name="Woods D."/>
            <person name="Fedorova N."/>
            <person name="Kim H.S."/>
            <person name="Shabalina S.A."/>
            <person name="Pearson T.R."/>
            <person name="Brinkac L."/>
            <person name="Tan P."/>
            <person name="Nandi T."/>
            <person name="Crabtree J."/>
            <person name="Badger J."/>
            <person name="Beckstrom-Sternberg S."/>
            <person name="Saqib M."/>
            <person name="Schutzer S.E."/>
            <person name="Keim P."/>
            <person name="Nierman W.C."/>
        </authorList>
    </citation>
    <scope>NUCLEOTIDE SEQUENCE [LARGE SCALE GENOMIC DNA]</scope>
    <source>
        <strain>668</strain>
    </source>
</reference>
<protein>
    <recommendedName>
        <fullName evidence="1">Aspartyl/glutamyl-tRNA(Asn/Gln) amidotransferase subunit B</fullName>
        <shortName evidence="1">Asp/Glu-ADT subunit B</shortName>
        <ecNumber evidence="1">6.3.5.-</ecNumber>
    </recommendedName>
</protein>
<accession>A3N4F5</accession>
<sequence>MTQWEVVIGLETHAQLSTVSKIFSGASTQFGAQPNTQACPVDLALPGVLPVLNRGAVERAIRFGLAIGATVAPRSVFARKNYFYPDLPKGYQISQYEIPVVQGGQITIQVPANEKAGKQAYSKTVNLTRAHLEEDAGKSLHEDFAGMTGIDLNRAGTPLLEIVTEPEMRSAAEAVAYAKALHGLVMWLGICDGNMQEGSFRCDANVSVRPVGQEKFGTRAEIKNLNSFRFLEDAINYEVRRQIELIEDGGEVVQETRLYDPDKRETRSMRSKEDAHDYRYFPDPDLMPLVIGADWIARVKGEMPELPAAMQQRFVEQYGVSAYDAGVLTSTKAMAEYFEALVAKAGAANAKLAANWLMGDVSSQLNRDGIDIDACPVSAAQLALVLQRIADGTISNKIAKEIFVTIWDEKAADEGAADRIIEAKGLKQISDTGALEAIIDEVLAANAKSVEEFRAGKDKAFNALVGQAMKATKGKANPQQVNELLKKKLG</sequence>
<feature type="chain" id="PRO_1000015947" description="Aspartyl/glutamyl-tRNA(Asn/Gln) amidotransferase subunit B">
    <location>
        <begin position="1"/>
        <end position="490"/>
    </location>
</feature>
<proteinExistence type="inferred from homology"/>
<gene>
    <name evidence="1" type="primary">gatB</name>
    <name type="ordered locus">BURPS668_0173</name>
</gene>
<evidence type="ECO:0000255" key="1">
    <source>
        <dbReference type="HAMAP-Rule" id="MF_00121"/>
    </source>
</evidence>
<organism>
    <name type="scientific">Burkholderia pseudomallei (strain 668)</name>
    <dbReference type="NCBI Taxonomy" id="320373"/>
    <lineage>
        <taxon>Bacteria</taxon>
        <taxon>Pseudomonadati</taxon>
        <taxon>Pseudomonadota</taxon>
        <taxon>Betaproteobacteria</taxon>
        <taxon>Burkholderiales</taxon>
        <taxon>Burkholderiaceae</taxon>
        <taxon>Burkholderia</taxon>
        <taxon>pseudomallei group</taxon>
    </lineage>
</organism>
<keyword id="KW-0067">ATP-binding</keyword>
<keyword id="KW-0436">Ligase</keyword>
<keyword id="KW-0547">Nucleotide-binding</keyword>
<keyword id="KW-0648">Protein biosynthesis</keyword>
<name>GATB_BURP6</name>
<dbReference type="EC" id="6.3.5.-" evidence="1"/>
<dbReference type="EMBL" id="CP000570">
    <property type="protein sequence ID" value="ABN83870.1"/>
    <property type="molecule type" value="Genomic_DNA"/>
</dbReference>
<dbReference type="RefSeq" id="WP_004523090.1">
    <property type="nucleotide sequence ID" value="NC_009074.1"/>
</dbReference>
<dbReference type="SMR" id="A3N4F5"/>
<dbReference type="GeneID" id="93058697"/>
<dbReference type="KEGG" id="bpd:BURPS668_0173"/>
<dbReference type="HOGENOM" id="CLU_019240_0_0_4"/>
<dbReference type="GO" id="GO:0050566">
    <property type="term" value="F:asparaginyl-tRNA synthase (glutamine-hydrolyzing) activity"/>
    <property type="evidence" value="ECO:0007669"/>
    <property type="project" value="RHEA"/>
</dbReference>
<dbReference type="GO" id="GO:0005524">
    <property type="term" value="F:ATP binding"/>
    <property type="evidence" value="ECO:0007669"/>
    <property type="project" value="UniProtKB-KW"/>
</dbReference>
<dbReference type="GO" id="GO:0050567">
    <property type="term" value="F:glutaminyl-tRNA synthase (glutamine-hydrolyzing) activity"/>
    <property type="evidence" value="ECO:0007669"/>
    <property type="project" value="UniProtKB-UniRule"/>
</dbReference>
<dbReference type="GO" id="GO:0070681">
    <property type="term" value="P:glutaminyl-tRNAGln biosynthesis via transamidation"/>
    <property type="evidence" value="ECO:0007669"/>
    <property type="project" value="TreeGrafter"/>
</dbReference>
<dbReference type="GO" id="GO:0006412">
    <property type="term" value="P:translation"/>
    <property type="evidence" value="ECO:0007669"/>
    <property type="project" value="UniProtKB-UniRule"/>
</dbReference>
<dbReference type="FunFam" id="1.10.10.410:FF:000001">
    <property type="entry name" value="Aspartyl/glutamyl-tRNA(Asn/Gln) amidotransferase subunit B"/>
    <property type="match status" value="1"/>
</dbReference>
<dbReference type="FunFam" id="1.10.150.380:FF:000001">
    <property type="entry name" value="Aspartyl/glutamyl-tRNA(Asn/Gln) amidotransferase subunit B"/>
    <property type="match status" value="1"/>
</dbReference>
<dbReference type="Gene3D" id="1.10.10.410">
    <property type="match status" value="1"/>
</dbReference>
<dbReference type="Gene3D" id="1.10.150.380">
    <property type="entry name" value="GatB domain, N-terminal subdomain"/>
    <property type="match status" value="1"/>
</dbReference>
<dbReference type="HAMAP" id="MF_00121">
    <property type="entry name" value="GatB"/>
    <property type="match status" value="1"/>
</dbReference>
<dbReference type="InterPro" id="IPR017959">
    <property type="entry name" value="Asn/Gln-tRNA_amidoTrfase_suB/E"/>
</dbReference>
<dbReference type="InterPro" id="IPR006075">
    <property type="entry name" value="Asn/Gln-tRNA_Trfase_suB/E_cat"/>
</dbReference>
<dbReference type="InterPro" id="IPR018027">
    <property type="entry name" value="Asn/Gln_amidotransferase"/>
</dbReference>
<dbReference type="InterPro" id="IPR003789">
    <property type="entry name" value="Asn/Gln_tRNA_amidoTrase-B-like"/>
</dbReference>
<dbReference type="InterPro" id="IPR004413">
    <property type="entry name" value="GatB"/>
</dbReference>
<dbReference type="InterPro" id="IPR042114">
    <property type="entry name" value="GatB_C_1"/>
</dbReference>
<dbReference type="InterPro" id="IPR023168">
    <property type="entry name" value="GatB_Yqey_C_2"/>
</dbReference>
<dbReference type="InterPro" id="IPR017958">
    <property type="entry name" value="Gln-tRNA_amidoTrfase_suB_CS"/>
</dbReference>
<dbReference type="InterPro" id="IPR014746">
    <property type="entry name" value="Gln_synth/guanido_kin_cat_dom"/>
</dbReference>
<dbReference type="NCBIfam" id="TIGR00133">
    <property type="entry name" value="gatB"/>
    <property type="match status" value="1"/>
</dbReference>
<dbReference type="NCBIfam" id="NF004012">
    <property type="entry name" value="PRK05477.1-2"/>
    <property type="match status" value="1"/>
</dbReference>
<dbReference type="NCBIfam" id="NF004014">
    <property type="entry name" value="PRK05477.1-4"/>
    <property type="match status" value="1"/>
</dbReference>
<dbReference type="NCBIfam" id="NF004015">
    <property type="entry name" value="PRK05477.1-5"/>
    <property type="match status" value="1"/>
</dbReference>
<dbReference type="PANTHER" id="PTHR11659">
    <property type="entry name" value="GLUTAMYL-TRNA GLN AMIDOTRANSFERASE SUBUNIT B MITOCHONDRIAL AND PROKARYOTIC PET112-RELATED"/>
    <property type="match status" value="1"/>
</dbReference>
<dbReference type="PANTHER" id="PTHR11659:SF0">
    <property type="entry name" value="GLUTAMYL-TRNA(GLN) AMIDOTRANSFERASE SUBUNIT B, MITOCHONDRIAL"/>
    <property type="match status" value="1"/>
</dbReference>
<dbReference type="Pfam" id="PF02934">
    <property type="entry name" value="GatB_N"/>
    <property type="match status" value="1"/>
</dbReference>
<dbReference type="Pfam" id="PF02637">
    <property type="entry name" value="GatB_Yqey"/>
    <property type="match status" value="1"/>
</dbReference>
<dbReference type="SMART" id="SM00845">
    <property type="entry name" value="GatB_Yqey"/>
    <property type="match status" value="1"/>
</dbReference>
<dbReference type="SUPFAM" id="SSF89095">
    <property type="entry name" value="GatB/YqeY motif"/>
    <property type="match status" value="1"/>
</dbReference>
<dbReference type="SUPFAM" id="SSF55931">
    <property type="entry name" value="Glutamine synthetase/guanido kinase"/>
    <property type="match status" value="1"/>
</dbReference>
<dbReference type="PROSITE" id="PS01234">
    <property type="entry name" value="GATB"/>
    <property type="match status" value="1"/>
</dbReference>